<protein>
    <recommendedName>
        <fullName evidence="1">NADH-ubiquinone oxidoreductase chain 3</fullName>
        <ecNumber evidence="1">7.1.1.2</ecNumber>
    </recommendedName>
    <alternativeName>
        <fullName>NADH dehydrogenase subunit 3</fullName>
    </alternativeName>
</protein>
<name>NU3M_DIDVI</name>
<reference key="1">
    <citation type="journal article" date="1994" name="Genetics">
        <title>The marsupial mitochondrial genome and the evolution of placental mammals.</title>
        <authorList>
            <person name="Janke A."/>
            <person name="Feldmaier-Fuchs G."/>
            <person name="Thomas K."/>
            <person name="von Haeseler A."/>
            <person name="Paabo S."/>
        </authorList>
    </citation>
    <scope>NUCLEOTIDE SEQUENCE [GENOMIC DNA]</scope>
    <source>
        <tissue>Liver</tissue>
    </source>
</reference>
<accession>P41306</accession>
<sequence>MINLIITLITNSLLSTIIIIIAFWLPQLYLYLEKSSPYECGFDPLGSARLPFSMKFFLVAITFLLFDLEIALLLPLPWAIQLPSPFTTLILSYCLIMLLTVGLAYEWIQKGLEWTE</sequence>
<proteinExistence type="inferred from homology"/>
<geneLocation type="mitochondrion"/>
<dbReference type="EC" id="7.1.1.2" evidence="1"/>
<dbReference type="EMBL" id="Z29573">
    <property type="protein sequence ID" value="CAA82684.1"/>
    <property type="molecule type" value="Genomic_DNA"/>
</dbReference>
<dbReference type="PIR" id="S47877">
    <property type="entry name" value="S47877"/>
</dbReference>
<dbReference type="RefSeq" id="NP_007102.1">
    <property type="nucleotide sequence ID" value="NC_001610.1"/>
</dbReference>
<dbReference type="SMR" id="P41306"/>
<dbReference type="GeneID" id="807775"/>
<dbReference type="CTD" id="4537"/>
<dbReference type="GO" id="GO:0005743">
    <property type="term" value="C:mitochondrial inner membrane"/>
    <property type="evidence" value="ECO:0000250"/>
    <property type="project" value="UniProtKB"/>
</dbReference>
<dbReference type="GO" id="GO:0030964">
    <property type="term" value="C:NADH dehydrogenase complex"/>
    <property type="evidence" value="ECO:0007669"/>
    <property type="project" value="TreeGrafter"/>
</dbReference>
<dbReference type="GO" id="GO:0008137">
    <property type="term" value="F:NADH dehydrogenase (ubiquinone) activity"/>
    <property type="evidence" value="ECO:0000250"/>
    <property type="project" value="UniProtKB"/>
</dbReference>
<dbReference type="GO" id="GO:0006120">
    <property type="term" value="P:mitochondrial electron transport, NADH to ubiquinone"/>
    <property type="evidence" value="ECO:0000250"/>
    <property type="project" value="UniProtKB"/>
</dbReference>
<dbReference type="FunFam" id="1.20.58.1610:FF:000004">
    <property type="entry name" value="NADH-quinone oxidoreductase subunit A"/>
    <property type="match status" value="1"/>
</dbReference>
<dbReference type="Gene3D" id="1.20.58.1610">
    <property type="entry name" value="NADH:ubiquinone/plastoquinone oxidoreductase, chain 3"/>
    <property type="match status" value="1"/>
</dbReference>
<dbReference type="InterPro" id="IPR000440">
    <property type="entry name" value="NADH_UbQ/plastoQ_OxRdtase_su3"/>
</dbReference>
<dbReference type="InterPro" id="IPR038430">
    <property type="entry name" value="NDAH_ubi_oxred_su3_sf"/>
</dbReference>
<dbReference type="PANTHER" id="PTHR11058">
    <property type="entry name" value="NADH-UBIQUINONE OXIDOREDUCTASE CHAIN 3"/>
    <property type="match status" value="1"/>
</dbReference>
<dbReference type="PANTHER" id="PTHR11058:SF9">
    <property type="entry name" value="NADH-UBIQUINONE OXIDOREDUCTASE CHAIN 3"/>
    <property type="match status" value="1"/>
</dbReference>
<dbReference type="Pfam" id="PF00507">
    <property type="entry name" value="Oxidored_q4"/>
    <property type="match status" value="1"/>
</dbReference>
<gene>
    <name evidence="1" type="primary">MT-ND3</name>
    <name type="synonym">MTND3</name>
    <name type="synonym">NADH3</name>
    <name type="synonym">ND3</name>
</gene>
<evidence type="ECO:0000250" key="1">
    <source>
        <dbReference type="UniProtKB" id="P03897"/>
    </source>
</evidence>
<evidence type="ECO:0000250" key="2">
    <source>
        <dbReference type="UniProtKB" id="P03898"/>
    </source>
</evidence>
<evidence type="ECO:0000255" key="3"/>
<evidence type="ECO:0000305" key="4"/>
<feature type="chain" id="PRO_0000117734" description="NADH-ubiquinone oxidoreductase chain 3">
    <location>
        <begin position="1"/>
        <end position="116"/>
    </location>
</feature>
<feature type="transmembrane region" description="Helical" evidence="3">
    <location>
        <begin position="4"/>
        <end position="24"/>
    </location>
</feature>
<feature type="transmembrane region" description="Helical" evidence="3">
    <location>
        <begin position="56"/>
        <end position="76"/>
    </location>
</feature>
<feature type="transmembrane region" description="Helical" evidence="3">
    <location>
        <begin position="88"/>
        <end position="108"/>
    </location>
</feature>
<comment type="function">
    <text evidence="1">Core subunit of the mitochondrial membrane respiratory chain NADH dehydrogenase (Complex I) which catalyzes electron transfer from NADH through the respiratory chain, using ubiquinone as an electron acceptor. Essential for the catalytic activity of complex I.</text>
</comment>
<comment type="catalytic activity">
    <reaction evidence="1">
        <text>a ubiquinone + NADH + 5 H(+)(in) = a ubiquinol + NAD(+) + 4 H(+)(out)</text>
        <dbReference type="Rhea" id="RHEA:29091"/>
        <dbReference type="Rhea" id="RHEA-COMP:9565"/>
        <dbReference type="Rhea" id="RHEA-COMP:9566"/>
        <dbReference type="ChEBI" id="CHEBI:15378"/>
        <dbReference type="ChEBI" id="CHEBI:16389"/>
        <dbReference type="ChEBI" id="CHEBI:17976"/>
        <dbReference type="ChEBI" id="CHEBI:57540"/>
        <dbReference type="ChEBI" id="CHEBI:57945"/>
        <dbReference type="EC" id="7.1.1.2"/>
    </reaction>
</comment>
<comment type="subunit">
    <text evidence="1">Core subunit of respiratory chain NADH dehydrogenase (Complex I) which is composed of 45 different subunits. Interacts with TMEM186. Interacts with TMEM242 (By similarity).</text>
</comment>
<comment type="subcellular location">
    <subcellularLocation>
        <location evidence="2">Mitochondrion inner membrane</location>
        <topology evidence="3">Multi-pass membrane protein</topology>
    </subcellularLocation>
</comment>
<comment type="similarity">
    <text evidence="4">Belongs to the complex I subunit 3 family.</text>
</comment>
<keyword id="KW-0249">Electron transport</keyword>
<keyword id="KW-0472">Membrane</keyword>
<keyword id="KW-0496">Mitochondrion</keyword>
<keyword id="KW-0999">Mitochondrion inner membrane</keyword>
<keyword id="KW-0520">NAD</keyword>
<keyword id="KW-0679">Respiratory chain</keyword>
<keyword id="KW-1278">Translocase</keyword>
<keyword id="KW-0812">Transmembrane</keyword>
<keyword id="KW-1133">Transmembrane helix</keyword>
<keyword id="KW-0813">Transport</keyword>
<keyword id="KW-0830">Ubiquinone</keyword>
<organism>
    <name type="scientific">Didelphis virginiana</name>
    <name type="common">North American opossum</name>
    <name type="synonym">Didelphis marsupialis virginiana</name>
    <dbReference type="NCBI Taxonomy" id="9267"/>
    <lineage>
        <taxon>Eukaryota</taxon>
        <taxon>Metazoa</taxon>
        <taxon>Chordata</taxon>
        <taxon>Craniata</taxon>
        <taxon>Vertebrata</taxon>
        <taxon>Euteleostomi</taxon>
        <taxon>Mammalia</taxon>
        <taxon>Metatheria</taxon>
        <taxon>Didelphimorphia</taxon>
        <taxon>Didelphidae</taxon>
        <taxon>Didelphis</taxon>
    </lineage>
</organism>